<protein>
    <recommendedName>
        <fullName evidence="1">Uridine kinase</fullName>
        <ecNumber evidence="1">2.7.1.48</ecNumber>
    </recommendedName>
    <alternativeName>
        <fullName evidence="1">Cytidine monophosphokinase</fullName>
    </alternativeName>
    <alternativeName>
        <fullName evidence="1">Uridine monophosphokinase</fullName>
    </alternativeName>
</protein>
<proteinExistence type="inferred from homology"/>
<accession>Q1WTY6</accession>
<feature type="chain" id="PRO_1000200514" description="Uridine kinase">
    <location>
        <begin position="1"/>
        <end position="213"/>
    </location>
</feature>
<feature type="binding site" evidence="1">
    <location>
        <begin position="15"/>
        <end position="22"/>
    </location>
    <ligand>
        <name>ATP</name>
        <dbReference type="ChEBI" id="CHEBI:30616"/>
    </ligand>
</feature>
<name>URK_LIGS1</name>
<reference key="1">
    <citation type="journal article" date="2006" name="Proc. Natl. Acad. Sci. U.S.A.">
        <title>Multireplicon genome architecture of Lactobacillus salivarius.</title>
        <authorList>
            <person name="Claesson M.J."/>
            <person name="Li Y."/>
            <person name="Leahy S."/>
            <person name="Canchaya C."/>
            <person name="van Pijkeren J.P."/>
            <person name="Cerdeno-Tarraga A.M."/>
            <person name="Parkhill J."/>
            <person name="Flynn S."/>
            <person name="O'Sullivan G.C."/>
            <person name="Collins J.K."/>
            <person name="Higgins D."/>
            <person name="Shanahan F."/>
            <person name="Fitzgerald G.F."/>
            <person name="van Sinderen D."/>
            <person name="O'Toole P.W."/>
        </authorList>
    </citation>
    <scope>NUCLEOTIDE SEQUENCE [LARGE SCALE GENOMIC DNA]</scope>
    <source>
        <strain>UCC118</strain>
    </source>
</reference>
<evidence type="ECO:0000255" key="1">
    <source>
        <dbReference type="HAMAP-Rule" id="MF_00551"/>
    </source>
</evidence>
<gene>
    <name evidence="1" type="primary">udk</name>
    <name type="ordered locus">LSL_0816</name>
</gene>
<sequence>MANRENKPVIIGVTGGSGSGKTTVSRAIFEQLHGHSLLMLQEDSYYNDQSDMPFEERIKTNYDHPNAFDTELLVKQLKDLLDWKTIEKPIYDYTEHTRSSEVEKVEPKEVIILEGILVLNDPALRDLMDIKIFVDTDDDIRIIRRIQRDIEERGRSLQSVIDQYKSTVKPMYHQFIEPTKRYADIIVPEGGENQVAIDLLVTKVRDILRKREK</sequence>
<organism>
    <name type="scientific">Ligilactobacillus salivarius (strain UCC118)</name>
    <name type="common">Lactobacillus salivarius</name>
    <dbReference type="NCBI Taxonomy" id="362948"/>
    <lineage>
        <taxon>Bacteria</taxon>
        <taxon>Bacillati</taxon>
        <taxon>Bacillota</taxon>
        <taxon>Bacilli</taxon>
        <taxon>Lactobacillales</taxon>
        <taxon>Lactobacillaceae</taxon>
        <taxon>Ligilactobacillus</taxon>
    </lineage>
</organism>
<keyword id="KW-0067">ATP-binding</keyword>
<keyword id="KW-0963">Cytoplasm</keyword>
<keyword id="KW-0418">Kinase</keyword>
<keyword id="KW-0547">Nucleotide-binding</keyword>
<keyword id="KW-1185">Reference proteome</keyword>
<keyword id="KW-0808">Transferase</keyword>
<dbReference type="EC" id="2.7.1.48" evidence="1"/>
<dbReference type="EMBL" id="CP000233">
    <property type="protein sequence ID" value="ABD99626.1"/>
    <property type="molecule type" value="Genomic_DNA"/>
</dbReference>
<dbReference type="RefSeq" id="WP_003700143.1">
    <property type="nucleotide sequence ID" value="NC_007929.1"/>
</dbReference>
<dbReference type="RefSeq" id="YP_535709.1">
    <property type="nucleotide sequence ID" value="NC_007929.1"/>
</dbReference>
<dbReference type="SMR" id="Q1WTY6"/>
<dbReference type="STRING" id="362948.LSL_0816"/>
<dbReference type="GeneID" id="89465598"/>
<dbReference type="KEGG" id="lsl:LSL_0816"/>
<dbReference type="PATRIC" id="fig|362948.14.peg.890"/>
<dbReference type="HOGENOM" id="CLU_021278_1_2_9"/>
<dbReference type="OrthoDB" id="9777642at2"/>
<dbReference type="UniPathway" id="UPA00574">
    <property type="reaction ID" value="UER00637"/>
</dbReference>
<dbReference type="UniPathway" id="UPA00579">
    <property type="reaction ID" value="UER00640"/>
</dbReference>
<dbReference type="Proteomes" id="UP000006559">
    <property type="component" value="Chromosome"/>
</dbReference>
<dbReference type="GO" id="GO:0005737">
    <property type="term" value="C:cytoplasm"/>
    <property type="evidence" value="ECO:0007669"/>
    <property type="project" value="UniProtKB-SubCell"/>
</dbReference>
<dbReference type="GO" id="GO:0005524">
    <property type="term" value="F:ATP binding"/>
    <property type="evidence" value="ECO:0007669"/>
    <property type="project" value="UniProtKB-UniRule"/>
</dbReference>
<dbReference type="GO" id="GO:0043771">
    <property type="term" value="F:cytidine kinase activity"/>
    <property type="evidence" value="ECO:0007669"/>
    <property type="project" value="RHEA"/>
</dbReference>
<dbReference type="GO" id="GO:0004849">
    <property type="term" value="F:uridine kinase activity"/>
    <property type="evidence" value="ECO:0007669"/>
    <property type="project" value="UniProtKB-UniRule"/>
</dbReference>
<dbReference type="GO" id="GO:0044211">
    <property type="term" value="P:CTP salvage"/>
    <property type="evidence" value="ECO:0007669"/>
    <property type="project" value="UniProtKB-UniRule"/>
</dbReference>
<dbReference type="GO" id="GO:0044206">
    <property type="term" value="P:UMP salvage"/>
    <property type="evidence" value="ECO:0007669"/>
    <property type="project" value="UniProtKB-UniRule"/>
</dbReference>
<dbReference type="CDD" id="cd02023">
    <property type="entry name" value="UMPK"/>
    <property type="match status" value="1"/>
</dbReference>
<dbReference type="FunFam" id="3.40.50.300:FF:000339">
    <property type="entry name" value="Uridine kinase"/>
    <property type="match status" value="1"/>
</dbReference>
<dbReference type="Gene3D" id="3.40.50.300">
    <property type="entry name" value="P-loop containing nucleotide triphosphate hydrolases"/>
    <property type="match status" value="1"/>
</dbReference>
<dbReference type="HAMAP" id="MF_00551">
    <property type="entry name" value="Uridine_kinase"/>
    <property type="match status" value="1"/>
</dbReference>
<dbReference type="InterPro" id="IPR027417">
    <property type="entry name" value="P-loop_NTPase"/>
</dbReference>
<dbReference type="InterPro" id="IPR006083">
    <property type="entry name" value="PRK/URK"/>
</dbReference>
<dbReference type="InterPro" id="IPR026008">
    <property type="entry name" value="Uridine_kinase"/>
</dbReference>
<dbReference type="InterPro" id="IPR000764">
    <property type="entry name" value="Uridine_kinase-like"/>
</dbReference>
<dbReference type="NCBIfam" id="NF004018">
    <property type="entry name" value="PRK05480.1"/>
    <property type="match status" value="1"/>
</dbReference>
<dbReference type="NCBIfam" id="TIGR00235">
    <property type="entry name" value="udk"/>
    <property type="match status" value="1"/>
</dbReference>
<dbReference type="PANTHER" id="PTHR10285">
    <property type="entry name" value="URIDINE KINASE"/>
    <property type="match status" value="1"/>
</dbReference>
<dbReference type="Pfam" id="PF00485">
    <property type="entry name" value="PRK"/>
    <property type="match status" value="1"/>
</dbReference>
<dbReference type="PRINTS" id="PR00988">
    <property type="entry name" value="URIDINKINASE"/>
</dbReference>
<dbReference type="SUPFAM" id="SSF52540">
    <property type="entry name" value="P-loop containing nucleoside triphosphate hydrolases"/>
    <property type="match status" value="1"/>
</dbReference>
<comment type="catalytic activity">
    <reaction evidence="1">
        <text>uridine + ATP = UMP + ADP + H(+)</text>
        <dbReference type="Rhea" id="RHEA:16825"/>
        <dbReference type="ChEBI" id="CHEBI:15378"/>
        <dbReference type="ChEBI" id="CHEBI:16704"/>
        <dbReference type="ChEBI" id="CHEBI:30616"/>
        <dbReference type="ChEBI" id="CHEBI:57865"/>
        <dbReference type="ChEBI" id="CHEBI:456216"/>
        <dbReference type="EC" id="2.7.1.48"/>
    </reaction>
</comment>
<comment type="catalytic activity">
    <reaction evidence="1">
        <text>cytidine + ATP = CMP + ADP + H(+)</text>
        <dbReference type="Rhea" id="RHEA:24674"/>
        <dbReference type="ChEBI" id="CHEBI:15378"/>
        <dbReference type="ChEBI" id="CHEBI:17562"/>
        <dbReference type="ChEBI" id="CHEBI:30616"/>
        <dbReference type="ChEBI" id="CHEBI:60377"/>
        <dbReference type="ChEBI" id="CHEBI:456216"/>
        <dbReference type="EC" id="2.7.1.48"/>
    </reaction>
</comment>
<comment type="pathway">
    <text evidence="1">Pyrimidine metabolism; CTP biosynthesis via salvage pathway; CTP from cytidine: step 1/3.</text>
</comment>
<comment type="pathway">
    <text evidence="1">Pyrimidine metabolism; UMP biosynthesis via salvage pathway; UMP from uridine: step 1/1.</text>
</comment>
<comment type="subcellular location">
    <subcellularLocation>
        <location evidence="1">Cytoplasm</location>
    </subcellularLocation>
</comment>
<comment type="similarity">
    <text evidence="1">Belongs to the uridine kinase family.</text>
</comment>